<organism>
    <name type="scientific">Suncus murinus</name>
    <name type="common">Asian house shrew</name>
    <name type="synonym">Musk shrew</name>
    <dbReference type="NCBI Taxonomy" id="9378"/>
    <lineage>
        <taxon>Eukaryota</taxon>
        <taxon>Metazoa</taxon>
        <taxon>Chordata</taxon>
        <taxon>Craniata</taxon>
        <taxon>Vertebrata</taxon>
        <taxon>Euteleostomi</taxon>
        <taxon>Mammalia</taxon>
        <taxon>Eutheria</taxon>
        <taxon>Laurasiatheria</taxon>
        <taxon>Eulipotyphla</taxon>
        <taxon>Soricidae</taxon>
        <taxon>Crocidurinae</taxon>
        <taxon>Suncus</taxon>
    </lineage>
</organism>
<gene>
    <name type="primary">PGC</name>
    <name type="synonym">PGNC</name>
</gene>
<feature type="signal peptide" evidence="4">
    <location>
        <begin position="1"/>
        <end position="16"/>
    </location>
</feature>
<feature type="propeptide" id="PRO_0000026075" description="Activation peptide">
    <location>
        <begin position="17"/>
        <end position="59"/>
    </location>
</feature>
<feature type="chain" id="PRO_0000026076" description="Gastricsin">
    <location>
        <begin position="60"/>
        <end position="389"/>
    </location>
</feature>
<feature type="domain" description="Peptidase A1" evidence="2">
    <location>
        <begin position="73"/>
        <end position="386"/>
    </location>
</feature>
<feature type="active site" evidence="3">
    <location>
        <position position="91"/>
    </location>
</feature>
<feature type="active site" evidence="3">
    <location>
        <position position="277"/>
    </location>
</feature>
<feature type="disulfide bond" evidence="1">
    <location>
        <begin position="104"/>
        <end position="109"/>
    </location>
</feature>
<feature type="disulfide bond" evidence="1">
    <location>
        <begin position="268"/>
        <end position="272"/>
    </location>
</feature>
<feature type="disulfide bond" evidence="1">
    <location>
        <begin position="311"/>
        <end position="344"/>
    </location>
</feature>
<feature type="sequence conflict" description="In Ref. 2; AA sequence." evidence="5" ref="2">
    <location>
        <position position="68"/>
    </location>
</feature>
<comment type="function">
    <text>Hydrolyzes a variety of proteins.</text>
</comment>
<comment type="catalytic activity">
    <reaction>
        <text>More restricted specificity than pepsin A, but shows preferential cleavage at Tyr-|-Xaa bonds. High activity on hemoglobin.</text>
        <dbReference type="EC" id="3.4.23.3"/>
    </reaction>
</comment>
<comment type="subcellular location">
    <subcellularLocation>
        <location>Secreted</location>
    </subcellularLocation>
</comment>
<comment type="similarity">
    <text evidence="5">Belongs to the peptidase A1 family.</text>
</comment>
<reference key="1">
    <citation type="journal article" date="2001" name="Mol. Phylogenet. Evol.">
        <title>Phylogenetic position of Eulipotyphla inferred from the cDNA sequences of pepsinogens A and C.</title>
        <authorList>
            <person name="Narita Y."/>
            <person name="Oda S."/>
            <person name="Takenaka O."/>
            <person name="Kageyama T."/>
        </authorList>
    </citation>
    <scope>NUCLEOTIDE SEQUENCE [MRNA]</scope>
</reference>
<reference key="2">
    <citation type="journal article" date="1997" name="J. Biochem.">
        <title>Pepsinogens and pepsins from house musk shrew, Suncus murinus: purification, characterization, determination of the amino-acid sequences of the activation segments, and analysis of proteolytic specificities.</title>
        <authorList>
            <person name="Narita Y."/>
            <person name="Oda S."/>
            <person name="Moriyama A."/>
            <person name="Takenaka O."/>
            <person name="Kageyama T."/>
        </authorList>
    </citation>
    <scope>PROTEIN SEQUENCE OF 17-80</scope>
    <source>
        <tissue>Gastric mucosa</tissue>
    </source>
</reference>
<dbReference type="EC" id="3.4.23.3"/>
<dbReference type="EMBL" id="AB047247">
    <property type="protein sequence ID" value="BAB11753.1"/>
    <property type="molecule type" value="mRNA"/>
</dbReference>
<dbReference type="PIR" id="PC4361">
    <property type="entry name" value="PC4361"/>
</dbReference>
<dbReference type="SMR" id="P81498"/>
<dbReference type="MEROPS" id="A01.003"/>
<dbReference type="GO" id="GO:0005615">
    <property type="term" value="C:extracellular space"/>
    <property type="evidence" value="ECO:0007669"/>
    <property type="project" value="TreeGrafter"/>
</dbReference>
<dbReference type="GO" id="GO:0004190">
    <property type="term" value="F:aspartic-type endopeptidase activity"/>
    <property type="evidence" value="ECO:0007669"/>
    <property type="project" value="UniProtKB-KW"/>
</dbReference>
<dbReference type="GO" id="GO:0007586">
    <property type="term" value="P:digestion"/>
    <property type="evidence" value="ECO:0007669"/>
    <property type="project" value="UniProtKB-KW"/>
</dbReference>
<dbReference type="GO" id="GO:0006508">
    <property type="term" value="P:proteolysis"/>
    <property type="evidence" value="ECO:0007669"/>
    <property type="project" value="UniProtKB-KW"/>
</dbReference>
<dbReference type="FunFam" id="2.40.70.10:FF:000006">
    <property type="entry name" value="Cathepsin E"/>
    <property type="match status" value="1"/>
</dbReference>
<dbReference type="FunFam" id="2.40.70.10:FF:000004">
    <property type="entry name" value="Pepsin A"/>
    <property type="match status" value="1"/>
</dbReference>
<dbReference type="Gene3D" id="6.10.140.60">
    <property type="match status" value="1"/>
</dbReference>
<dbReference type="Gene3D" id="2.40.70.10">
    <property type="entry name" value="Acid Proteases"/>
    <property type="match status" value="2"/>
</dbReference>
<dbReference type="InterPro" id="IPR001461">
    <property type="entry name" value="Aspartic_peptidase_A1"/>
</dbReference>
<dbReference type="InterPro" id="IPR001969">
    <property type="entry name" value="Aspartic_peptidase_AS"/>
</dbReference>
<dbReference type="InterPro" id="IPR012848">
    <property type="entry name" value="Aspartic_peptidase_N"/>
</dbReference>
<dbReference type="InterPro" id="IPR033121">
    <property type="entry name" value="PEPTIDASE_A1"/>
</dbReference>
<dbReference type="InterPro" id="IPR021109">
    <property type="entry name" value="Peptidase_aspartic_dom_sf"/>
</dbReference>
<dbReference type="PANTHER" id="PTHR47966">
    <property type="entry name" value="BETA-SITE APP-CLEAVING ENZYME, ISOFORM A-RELATED"/>
    <property type="match status" value="1"/>
</dbReference>
<dbReference type="PANTHER" id="PTHR47966:SF72">
    <property type="entry name" value="GASTRICSIN"/>
    <property type="match status" value="1"/>
</dbReference>
<dbReference type="Pfam" id="PF07966">
    <property type="entry name" value="A1_Propeptide"/>
    <property type="match status" value="1"/>
</dbReference>
<dbReference type="Pfam" id="PF00026">
    <property type="entry name" value="Asp"/>
    <property type="match status" value="1"/>
</dbReference>
<dbReference type="PRINTS" id="PR00792">
    <property type="entry name" value="PEPSIN"/>
</dbReference>
<dbReference type="SUPFAM" id="SSF50630">
    <property type="entry name" value="Acid proteases"/>
    <property type="match status" value="1"/>
</dbReference>
<dbReference type="PROSITE" id="PS00141">
    <property type="entry name" value="ASP_PROTEASE"/>
    <property type="match status" value="2"/>
</dbReference>
<dbReference type="PROSITE" id="PS51767">
    <property type="entry name" value="PEPTIDASE_A1"/>
    <property type="match status" value="1"/>
</dbReference>
<accession>P81498</accession>
<accession>Q9GMY5</accession>
<protein>
    <recommendedName>
        <fullName>Gastricsin</fullName>
        <ecNumber>3.4.23.3</ecNumber>
    </recommendedName>
    <alternativeName>
        <fullName>Pepsinogen C-1</fullName>
    </alternativeName>
</protein>
<evidence type="ECO:0000250" key="1"/>
<evidence type="ECO:0000255" key="2">
    <source>
        <dbReference type="PROSITE-ProRule" id="PRU01103"/>
    </source>
</evidence>
<evidence type="ECO:0000255" key="3">
    <source>
        <dbReference type="PROSITE-ProRule" id="PRU10094"/>
    </source>
</evidence>
<evidence type="ECO:0000269" key="4">
    <source>
    </source>
</evidence>
<evidence type="ECO:0000305" key="5"/>
<proteinExistence type="evidence at protein level"/>
<keyword id="KW-0064">Aspartyl protease</keyword>
<keyword id="KW-0222">Digestion</keyword>
<keyword id="KW-0903">Direct protein sequencing</keyword>
<keyword id="KW-1015">Disulfide bond</keyword>
<keyword id="KW-0378">Hydrolase</keyword>
<keyword id="KW-0645">Protease</keyword>
<keyword id="KW-0964">Secreted</keyword>
<keyword id="KW-0732">Signal</keyword>
<keyword id="KW-0865">Zymogen</keyword>
<name>PEPC_SUNMU</name>
<sequence length="389" mass="42667">MKWMVVALVCLQLLEAKVTKVTLKKFKSIRENLREQGLLEDFLKTNHYDPAQKYHFGDFSVAYEPMAYMDASYFGEISIGTPPQNFLVLFDTGSSNLWVPSVYCQSQACTGHARFNPNQSSTYSTNGQTFSLQYGSGSLTGFFGYDTMTVQNIKVPHQEFGLSQNEPGTNFIYAQFDGIMGMAYPSLAMGGATTALQGMLQEGALTSPVFSFYLSNQQGSQNGGAVIFGGVDNSLYTGQIFWAPVTQELYWQIGVEEFLIGGQATGWCQQGCQAIVDTGTSLLTVPQQFMSALQQATGAQQDQYGQLAVNCNSIQSLPTLTFIINGVQFPLPPSAYVLNTNGYCFLGVEPTYLPSQNGQPLWILGDVFLRSYYSVYDMGNNRVGFATAA</sequence>